<dbReference type="EMBL" id="CM000157">
    <property type="protein sequence ID" value="EDW88716.1"/>
    <property type="molecule type" value="Genomic_DNA"/>
</dbReference>
<dbReference type="SMR" id="B4NYQ2"/>
<dbReference type="EnsemblMetazoa" id="FBtr0265402">
    <property type="protein sequence ID" value="FBpp0263894"/>
    <property type="gene ID" value="FBgn0236263"/>
</dbReference>
<dbReference type="EnsemblMetazoa" id="XM_002088968.4">
    <property type="protein sequence ID" value="XP_002089004.1"/>
    <property type="gene ID" value="LOC6527937"/>
</dbReference>
<dbReference type="GeneID" id="6527937"/>
<dbReference type="KEGG" id="dya:Dyak_GE18884"/>
<dbReference type="eggNOG" id="KOG2185">
    <property type="taxonomic scope" value="Eukaryota"/>
</dbReference>
<dbReference type="HOGENOM" id="CLU_040504_1_0_1"/>
<dbReference type="OMA" id="QYTRGIG"/>
<dbReference type="OrthoDB" id="5842926at2759"/>
<dbReference type="PhylomeDB" id="B4NYQ2"/>
<dbReference type="Proteomes" id="UP000002282">
    <property type="component" value="Chromosome 2L"/>
</dbReference>
<dbReference type="GO" id="GO:0005634">
    <property type="term" value="C:nucleus"/>
    <property type="evidence" value="ECO:0007669"/>
    <property type="project" value="UniProtKB-SubCell"/>
</dbReference>
<dbReference type="GO" id="GO:0001227">
    <property type="term" value="F:DNA-binding transcription repressor activity, RNA polymerase II-specific"/>
    <property type="evidence" value="ECO:0007669"/>
    <property type="project" value="TreeGrafter"/>
</dbReference>
<dbReference type="GO" id="GO:0000978">
    <property type="term" value="F:RNA polymerase II cis-regulatory region sequence-specific DNA binding"/>
    <property type="evidence" value="ECO:0007669"/>
    <property type="project" value="TreeGrafter"/>
</dbReference>
<dbReference type="GO" id="GO:0008270">
    <property type="term" value="F:zinc ion binding"/>
    <property type="evidence" value="ECO:0007669"/>
    <property type="project" value="UniProtKB-KW"/>
</dbReference>
<dbReference type="Gene3D" id="2.30.30.1190">
    <property type="match status" value="1"/>
</dbReference>
<dbReference type="InterPro" id="IPR000467">
    <property type="entry name" value="G_patch_dom"/>
</dbReference>
<dbReference type="InterPro" id="IPR000571">
    <property type="entry name" value="Znf_CCCH"/>
</dbReference>
<dbReference type="PANTHER" id="PTHR46297">
    <property type="entry name" value="ZINC FINGER CCCH-TYPE WITH G PATCH DOMAIN-CONTAINING PROTEIN"/>
    <property type="match status" value="1"/>
</dbReference>
<dbReference type="PANTHER" id="PTHR46297:SF1">
    <property type="entry name" value="ZINC FINGER CCCH-TYPE WITH G PATCH DOMAIN-CONTAINING PROTEIN"/>
    <property type="match status" value="1"/>
</dbReference>
<dbReference type="Pfam" id="PF01585">
    <property type="entry name" value="G-patch"/>
    <property type="match status" value="1"/>
</dbReference>
<dbReference type="SMART" id="SM00443">
    <property type="entry name" value="G_patch"/>
    <property type="match status" value="1"/>
</dbReference>
<dbReference type="PROSITE" id="PS50174">
    <property type="entry name" value="G_PATCH"/>
    <property type="match status" value="1"/>
</dbReference>
<dbReference type="PROSITE" id="PS50103">
    <property type="entry name" value="ZF_C3H1"/>
    <property type="match status" value="1"/>
</dbReference>
<evidence type="ECO:0000250" key="1"/>
<evidence type="ECO:0000255" key="2">
    <source>
        <dbReference type="PROSITE-ProRule" id="PRU00092"/>
    </source>
</evidence>
<evidence type="ECO:0000255" key="3">
    <source>
        <dbReference type="PROSITE-ProRule" id="PRU00723"/>
    </source>
</evidence>
<evidence type="ECO:0000256" key="4">
    <source>
        <dbReference type="SAM" id="MobiDB-lite"/>
    </source>
</evidence>
<accession>B4NYQ2</accession>
<reference key="1">
    <citation type="journal article" date="2007" name="Nature">
        <title>Evolution of genes and genomes on the Drosophila phylogeny.</title>
        <authorList>
            <consortium name="Drosophila 12 genomes consortium"/>
        </authorList>
    </citation>
    <scope>NUCLEOTIDE SEQUENCE [LARGE SCALE GENOMIC DNA]</scope>
    <source>
        <strain>Tai18E2 / Tucson 14021-0261.01</strain>
    </source>
</reference>
<protein>
    <recommendedName>
        <fullName>Zinc finger CCCH-type with G patch domain-containing protein</fullName>
    </recommendedName>
</protein>
<organism>
    <name type="scientific">Drosophila yakuba</name>
    <name type="common">Fruit fly</name>
    <dbReference type="NCBI Taxonomy" id="7245"/>
    <lineage>
        <taxon>Eukaryota</taxon>
        <taxon>Metazoa</taxon>
        <taxon>Ecdysozoa</taxon>
        <taxon>Arthropoda</taxon>
        <taxon>Hexapoda</taxon>
        <taxon>Insecta</taxon>
        <taxon>Pterygota</taxon>
        <taxon>Neoptera</taxon>
        <taxon>Endopterygota</taxon>
        <taxon>Diptera</taxon>
        <taxon>Brachycera</taxon>
        <taxon>Muscomorpha</taxon>
        <taxon>Ephydroidea</taxon>
        <taxon>Drosophilidae</taxon>
        <taxon>Drosophila</taxon>
        <taxon>Sophophora</taxon>
    </lineage>
</organism>
<comment type="function">
    <text evidence="1">Transcription repressor.</text>
</comment>
<comment type="subcellular location">
    <subcellularLocation>
        <location evidence="1">Nucleus</location>
    </subcellularLocation>
</comment>
<keyword id="KW-0238">DNA-binding</keyword>
<keyword id="KW-0479">Metal-binding</keyword>
<keyword id="KW-0539">Nucleus</keyword>
<keyword id="KW-0678">Repressor</keyword>
<keyword id="KW-0804">Transcription</keyword>
<keyword id="KW-0805">Transcription regulation</keyword>
<keyword id="KW-0862">Zinc</keyword>
<keyword id="KW-0863">Zinc-finger</keyword>
<feature type="chain" id="PRO_0000385210" description="Zinc finger CCCH-type with G patch domain-containing protein">
    <location>
        <begin position="1"/>
        <end position="513"/>
    </location>
</feature>
<feature type="domain" description="G-patch" evidence="2">
    <location>
        <begin position="312"/>
        <end position="358"/>
    </location>
</feature>
<feature type="zinc finger region" description="C3H1-type" evidence="3">
    <location>
        <begin position="155"/>
        <end position="178"/>
    </location>
</feature>
<feature type="region of interest" description="Disordered" evidence="4">
    <location>
        <begin position="252"/>
        <end position="283"/>
    </location>
</feature>
<feature type="region of interest" description="Disordered" evidence="4">
    <location>
        <begin position="455"/>
        <end position="513"/>
    </location>
</feature>
<feature type="compositionally biased region" description="Acidic residues" evidence="4">
    <location>
        <begin position="252"/>
        <end position="261"/>
    </location>
</feature>
<feature type="compositionally biased region" description="Acidic residues" evidence="4">
    <location>
        <begin position="271"/>
        <end position="283"/>
    </location>
</feature>
<feature type="compositionally biased region" description="Basic and acidic residues" evidence="4">
    <location>
        <begin position="455"/>
        <end position="467"/>
    </location>
</feature>
<feature type="compositionally biased region" description="Polar residues" evidence="4">
    <location>
        <begin position="468"/>
        <end position="480"/>
    </location>
</feature>
<feature type="compositionally biased region" description="Basic and acidic residues" evidence="4">
    <location>
        <begin position="496"/>
        <end position="513"/>
    </location>
</feature>
<gene>
    <name type="ORF">GE18884</name>
</gene>
<sequence length="513" mass="58674">MEEYEAQLLVVEQALENAADEAQRQDLLALKNNLQELLALTRDTGDEAHTDELPQQGDDLDDELQRLKSELSDLEAVGSSQTALDEERQLADLRTKYTAMVGEKCSAPHEHSWGTCYHNALICGVDDEVVMNSEGVLDARLRVLFTNPTHREMLPCSYYLEGECRFDETKCRFSHGALVPGSSIRKYNPPDFHKLSRSRPVFALLPDRLWHRGRVLCVNFVEQVCRVRLDGQDHKERERDFKFEELFPLTTDQDEDDELSSEESNSSMNDDSSDEAESDMDDLEEARRARMVELSLFTFKPTERLGAWEEFTRGIGSKLMEKMGYIHGTGLGSDGRGIVTPVSAQILPQGRSLDACMELREAANGDKDYFSVERKLKRAQRRQRKADEKAYVRESQRVDVFTFLNDSVLGPGESSQQGEQVAKKIKTNELQQHSTKTLNVETVRIADEIRRKQRDMAKVKQSLDRNSGDAQLQKRLQVQMESHKQELATLQAQERSLSKEQQTRKSKNKMFEF</sequence>
<proteinExistence type="inferred from homology"/>
<name>ZGPAT_DROYA</name>